<gene>
    <name evidence="1" type="primary">rplF</name>
    <name type="ordered locus">Aave_0616</name>
</gene>
<name>RL6_PARC0</name>
<evidence type="ECO:0000255" key="1">
    <source>
        <dbReference type="HAMAP-Rule" id="MF_01365"/>
    </source>
</evidence>
<evidence type="ECO:0000305" key="2"/>
<comment type="function">
    <text evidence="1">This protein binds to the 23S rRNA, and is important in its secondary structure. It is located near the subunit interface in the base of the L7/L12 stalk, and near the tRNA binding site of the peptidyltransferase center.</text>
</comment>
<comment type="subunit">
    <text evidence="1">Part of the 50S ribosomal subunit.</text>
</comment>
<comment type="similarity">
    <text evidence="1">Belongs to the universal ribosomal protein uL6 family.</text>
</comment>
<proteinExistence type="inferred from homology"/>
<accession>A1TJT2</accession>
<feature type="chain" id="PRO_1000055184" description="Large ribosomal subunit protein uL6">
    <location>
        <begin position="1"/>
        <end position="177"/>
    </location>
</feature>
<dbReference type="EMBL" id="CP000512">
    <property type="protein sequence ID" value="ABM31220.1"/>
    <property type="molecule type" value="Genomic_DNA"/>
</dbReference>
<dbReference type="RefSeq" id="WP_011793791.1">
    <property type="nucleotide sequence ID" value="NC_008752.1"/>
</dbReference>
<dbReference type="SMR" id="A1TJT2"/>
<dbReference type="STRING" id="397945.Aave_0616"/>
<dbReference type="GeneID" id="79790330"/>
<dbReference type="KEGG" id="aav:Aave_0616"/>
<dbReference type="eggNOG" id="COG0097">
    <property type="taxonomic scope" value="Bacteria"/>
</dbReference>
<dbReference type="HOGENOM" id="CLU_065464_1_2_4"/>
<dbReference type="OrthoDB" id="9805007at2"/>
<dbReference type="Proteomes" id="UP000002596">
    <property type="component" value="Chromosome"/>
</dbReference>
<dbReference type="GO" id="GO:0022625">
    <property type="term" value="C:cytosolic large ribosomal subunit"/>
    <property type="evidence" value="ECO:0007669"/>
    <property type="project" value="TreeGrafter"/>
</dbReference>
<dbReference type="GO" id="GO:0019843">
    <property type="term" value="F:rRNA binding"/>
    <property type="evidence" value="ECO:0007669"/>
    <property type="project" value="UniProtKB-UniRule"/>
</dbReference>
<dbReference type="GO" id="GO:0003735">
    <property type="term" value="F:structural constituent of ribosome"/>
    <property type="evidence" value="ECO:0007669"/>
    <property type="project" value="InterPro"/>
</dbReference>
<dbReference type="GO" id="GO:0002181">
    <property type="term" value="P:cytoplasmic translation"/>
    <property type="evidence" value="ECO:0007669"/>
    <property type="project" value="TreeGrafter"/>
</dbReference>
<dbReference type="FunFam" id="3.90.930.12:FF:000001">
    <property type="entry name" value="50S ribosomal protein L6"/>
    <property type="match status" value="1"/>
</dbReference>
<dbReference type="FunFam" id="3.90.930.12:FF:000002">
    <property type="entry name" value="50S ribosomal protein L6"/>
    <property type="match status" value="1"/>
</dbReference>
<dbReference type="Gene3D" id="3.90.930.12">
    <property type="entry name" value="Ribosomal protein L6, alpha-beta domain"/>
    <property type="match status" value="2"/>
</dbReference>
<dbReference type="HAMAP" id="MF_01365_B">
    <property type="entry name" value="Ribosomal_uL6_B"/>
    <property type="match status" value="1"/>
</dbReference>
<dbReference type="InterPro" id="IPR000702">
    <property type="entry name" value="Ribosomal_uL6-like"/>
</dbReference>
<dbReference type="InterPro" id="IPR036789">
    <property type="entry name" value="Ribosomal_uL6-like_a/b-dom_sf"/>
</dbReference>
<dbReference type="InterPro" id="IPR020040">
    <property type="entry name" value="Ribosomal_uL6_a/b-dom"/>
</dbReference>
<dbReference type="InterPro" id="IPR019906">
    <property type="entry name" value="Ribosomal_uL6_bac-type"/>
</dbReference>
<dbReference type="InterPro" id="IPR002358">
    <property type="entry name" value="Ribosomal_uL6_CS"/>
</dbReference>
<dbReference type="NCBIfam" id="TIGR03654">
    <property type="entry name" value="L6_bact"/>
    <property type="match status" value="1"/>
</dbReference>
<dbReference type="PANTHER" id="PTHR11655">
    <property type="entry name" value="60S/50S RIBOSOMAL PROTEIN L6/L9"/>
    <property type="match status" value="1"/>
</dbReference>
<dbReference type="PANTHER" id="PTHR11655:SF14">
    <property type="entry name" value="LARGE RIBOSOMAL SUBUNIT PROTEIN UL6M"/>
    <property type="match status" value="1"/>
</dbReference>
<dbReference type="Pfam" id="PF00347">
    <property type="entry name" value="Ribosomal_L6"/>
    <property type="match status" value="2"/>
</dbReference>
<dbReference type="PIRSF" id="PIRSF002162">
    <property type="entry name" value="Ribosomal_L6"/>
    <property type="match status" value="1"/>
</dbReference>
<dbReference type="PRINTS" id="PR00059">
    <property type="entry name" value="RIBOSOMALL6"/>
</dbReference>
<dbReference type="SUPFAM" id="SSF56053">
    <property type="entry name" value="Ribosomal protein L6"/>
    <property type="match status" value="2"/>
</dbReference>
<dbReference type="PROSITE" id="PS00525">
    <property type="entry name" value="RIBOSOMAL_L6_1"/>
    <property type="match status" value="1"/>
</dbReference>
<reference key="1">
    <citation type="submission" date="2006-12" db="EMBL/GenBank/DDBJ databases">
        <title>Complete sequence of Acidovorax avenae subsp. citrulli AAC00-1.</title>
        <authorList>
            <person name="Copeland A."/>
            <person name="Lucas S."/>
            <person name="Lapidus A."/>
            <person name="Barry K."/>
            <person name="Detter J.C."/>
            <person name="Glavina del Rio T."/>
            <person name="Dalin E."/>
            <person name="Tice H."/>
            <person name="Pitluck S."/>
            <person name="Kiss H."/>
            <person name="Brettin T."/>
            <person name="Bruce D."/>
            <person name="Han C."/>
            <person name="Tapia R."/>
            <person name="Gilna P."/>
            <person name="Schmutz J."/>
            <person name="Larimer F."/>
            <person name="Land M."/>
            <person name="Hauser L."/>
            <person name="Kyrpides N."/>
            <person name="Kim E."/>
            <person name="Stahl D."/>
            <person name="Richardson P."/>
        </authorList>
    </citation>
    <scope>NUCLEOTIDE SEQUENCE [LARGE SCALE GENOMIC DNA]</scope>
    <source>
        <strain>AAC00-1</strain>
    </source>
</reference>
<organism>
    <name type="scientific">Paracidovorax citrulli (strain AAC00-1)</name>
    <name type="common">Acidovorax citrulli</name>
    <dbReference type="NCBI Taxonomy" id="397945"/>
    <lineage>
        <taxon>Bacteria</taxon>
        <taxon>Pseudomonadati</taxon>
        <taxon>Pseudomonadota</taxon>
        <taxon>Betaproteobacteria</taxon>
        <taxon>Burkholderiales</taxon>
        <taxon>Comamonadaceae</taxon>
        <taxon>Paracidovorax</taxon>
    </lineage>
</organism>
<sequence length="177" mass="18917">MSRVGKMPVAIPNGVDVTITEEQISVKGSGGTLSVAQNRLVKIVNKDGKLSFEPADESREANAMSGTIRQLVNNMVVGVSKGFEKKLNLIGVGYKAQASGAKLNLAVGYSHPVNFDMPAGITVATPTPTEIVIKGADRQRVGQLAAEIRAVRPPEPYKGKGIRYSDEKVTIKETKKK</sequence>
<protein>
    <recommendedName>
        <fullName evidence="1">Large ribosomal subunit protein uL6</fullName>
    </recommendedName>
    <alternativeName>
        <fullName evidence="2">50S ribosomal protein L6</fullName>
    </alternativeName>
</protein>
<keyword id="KW-0687">Ribonucleoprotein</keyword>
<keyword id="KW-0689">Ribosomal protein</keyword>
<keyword id="KW-0694">RNA-binding</keyword>
<keyword id="KW-0699">rRNA-binding</keyword>